<reference key="1">
    <citation type="journal article" date="2007" name="PLoS ONE">
        <title>Paradoxical DNA repair and peroxide resistance gene conservation in Bacillus pumilus SAFR-032.</title>
        <authorList>
            <person name="Gioia J."/>
            <person name="Yerrapragada S."/>
            <person name="Qin X."/>
            <person name="Jiang H."/>
            <person name="Igboeli O.C."/>
            <person name="Muzny D."/>
            <person name="Dugan-Rocha S."/>
            <person name="Ding Y."/>
            <person name="Hawes A."/>
            <person name="Liu W."/>
            <person name="Perez L."/>
            <person name="Kovar C."/>
            <person name="Dinh H."/>
            <person name="Lee S."/>
            <person name="Nazareth L."/>
            <person name="Blyth P."/>
            <person name="Holder M."/>
            <person name="Buhay C."/>
            <person name="Tirumalai M.R."/>
            <person name="Liu Y."/>
            <person name="Dasgupta I."/>
            <person name="Bokhetache L."/>
            <person name="Fujita M."/>
            <person name="Karouia F."/>
            <person name="Eswara Moorthy P."/>
            <person name="Siefert J."/>
            <person name="Uzman A."/>
            <person name="Buzumbo P."/>
            <person name="Verma A."/>
            <person name="Zwiya H."/>
            <person name="McWilliams B.D."/>
            <person name="Olowu A."/>
            <person name="Clinkenbeard K.D."/>
            <person name="Newcombe D."/>
            <person name="Golebiewski L."/>
            <person name="Petrosino J.F."/>
            <person name="Nicholson W.L."/>
            <person name="Fox G.E."/>
            <person name="Venkateswaran K."/>
            <person name="Highlander S.K."/>
            <person name="Weinstock G.M."/>
        </authorList>
    </citation>
    <scope>NUCLEOTIDE SEQUENCE [LARGE SCALE GENOMIC DNA]</scope>
    <source>
        <strain>SAFR-032</strain>
    </source>
</reference>
<accession>A8FJG3</accession>
<sequence>MKKRNRLKKNEEFQKVFKKGQSMANRQFVIYQLDQPNQDELRLGLSVSKKIGNAVMRNRIKRLIRQVFLEEGHKLKQEKDYIVIARKPASELTFEETKKSLQHLFRKSAVYQQQPKKSS</sequence>
<organism>
    <name type="scientific">Bacillus pumilus (strain SAFR-032)</name>
    <dbReference type="NCBI Taxonomy" id="315750"/>
    <lineage>
        <taxon>Bacteria</taxon>
        <taxon>Bacillati</taxon>
        <taxon>Bacillota</taxon>
        <taxon>Bacilli</taxon>
        <taxon>Bacillales</taxon>
        <taxon>Bacillaceae</taxon>
        <taxon>Bacillus</taxon>
    </lineage>
</organism>
<dbReference type="EC" id="3.1.26.5" evidence="1"/>
<dbReference type="EMBL" id="CP000813">
    <property type="protein sequence ID" value="ABV64380.1"/>
    <property type="molecule type" value="Genomic_DNA"/>
</dbReference>
<dbReference type="RefSeq" id="WP_003214983.1">
    <property type="nucleotide sequence ID" value="NZ_VEIS01000021.1"/>
</dbReference>
<dbReference type="SMR" id="A8FJG3"/>
<dbReference type="STRING" id="315750.BPUM_3736"/>
<dbReference type="GeneID" id="5623029"/>
<dbReference type="KEGG" id="bpu:BPUM_3736"/>
<dbReference type="eggNOG" id="COG0594">
    <property type="taxonomic scope" value="Bacteria"/>
</dbReference>
<dbReference type="HOGENOM" id="CLU_117179_9_1_9"/>
<dbReference type="OrthoDB" id="9810867at2"/>
<dbReference type="Proteomes" id="UP000001355">
    <property type="component" value="Chromosome"/>
</dbReference>
<dbReference type="GO" id="GO:0030677">
    <property type="term" value="C:ribonuclease P complex"/>
    <property type="evidence" value="ECO:0007669"/>
    <property type="project" value="TreeGrafter"/>
</dbReference>
<dbReference type="GO" id="GO:0042781">
    <property type="term" value="F:3'-tRNA processing endoribonuclease activity"/>
    <property type="evidence" value="ECO:0007669"/>
    <property type="project" value="TreeGrafter"/>
</dbReference>
<dbReference type="GO" id="GO:0004526">
    <property type="term" value="F:ribonuclease P activity"/>
    <property type="evidence" value="ECO:0007669"/>
    <property type="project" value="UniProtKB-UniRule"/>
</dbReference>
<dbReference type="GO" id="GO:0000049">
    <property type="term" value="F:tRNA binding"/>
    <property type="evidence" value="ECO:0007669"/>
    <property type="project" value="UniProtKB-UniRule"/>
</dbReference>
<dbReference type="GO" id="GO:0001682">
    <property type="term" value="P:tRNA 5'-leader removal"/>
    <property type="evidence" value="ECO:0007669"/>
    <property type="project" value="UniProtKB-UniRule"/>
</dbReference>
<dbReference type="FunFam" id="3.30.230.10:FF:000021">
    <property type="entry name" value="Ribonuclease P protein component"/>
    <property type="match status" value="1"/>
</dbReference>
<dbReference type="Gene3D" id="3.30.230.10">
    <property type="match status" value="1"/>
</dbReference>
<dbReference type="HAMAP" id="MF_00227">
    <property type="entry name" value="RNase_P"/>
    <property type="match status" value="1"/>
</dbReference>
<dbReference type="InterPro" id="IPR020568">
    <property type="entry name" value="Ribosomal_Su5_D2-typ_SF"/>
</dbReference>
<dbReference type="InterPro" id="IPR014721">
    <property type="entry name" value="Ribsml_uS5_D2-typ_fold_subgr"/>
</dbReference>
<dbReference type="InterPro" id="IPR000100">
    <property type="entry name" value="RNase_P"/>
</dbReference>
<dbReference type="InterPro" id="IPR020539">
    <property type="entry name" value="RNase_P_CS"/>
</dbReference>
<dbReference type="NCBIfam" id="TIGR00188">
    <property type="entry name" value="rnpA"/>
    <property type="match status" value="1"/>
</dbReference>
<dbReference type="PANTHER" id="PTHR33992">
    <property type="entry name" value="RIBONUCLEASE P PROTEIN COMPONENT"/>
    <property type="match status" value="1"/>
</dbReference>
<dbReference type="PANTHER" id="PTHR33992:SF1">
    <property type="entry name" value="RIBONUCLEASE P PROTEIN COMPONENT"/>
    <property type="match status" value="1"/>
</dbReference>
<dbReference type="Pfam" id="PF00825">
    <property type="entry name" value="Ribonuclease_P"/>
    <property type="match status" value="1"/>
</dbReference>
<dbReference type="SUPFAM" id="SSF54211">
    <property type="entry name" value="Ribosomal protein S5 domain 2-like"/>
    <property type="match status" value="1"/>
</dbReference>
<dbReference type="PROSITE" id="PS00648">
    <property type="entry name" value="RIBONUCLEASE_P"/>
    <property type="match status" value="1"/>
</dbReference>
<proteinExistence type="inferred from homology"/>
<feature type="chain" id="PRO_1000058749" description="Ribonuclease P protein component">
    <location>
        <begin position="1"/>
        <end position="119"/>
    </location>
</feature>
<protein>
    <recommendedName>
        <fullName evidence="1">Ribonuclease P protein component</fullName>
        <shortName evidence="1">RNase P protein</shortName>
        <shortName evidence="1">RNaseP protein</shortName>
        <ecNumber evidence="1">3.1.26.5</ecNumber>
    </recommendedName>
    <alternativeName>
        <fullName evidence="1">Protein C5</fullName>
    </alternativeName>
</protein>
<name>RNPA_BACP2</name>
<gene>
    <name evidence="1" type="primary">rnpA</name>
    <name type="ordered locus">BPUM_3736</name>
</gene>
<keyword id="KW-0255">Endonuclease</keyword>
<keyword id="KW-0378">Hydrolase</keyword>
<keyword id="KW-0540">Nuclease</keyword>
<keyword id="KW-0694">RNA-binding</keyword>
<keyword id="KW-0819">tRNA processing</keyword>
<evidence type="ECO:0000255" key="1">
    <source>
        <dbReference type="HAMAP-Rule" id="MF_00227"/>
    </source>
</evidence>
<comment type="function">
    <text evidence="1">RNaseP catalyzes the removal of the 5'-leader sequence from pre-tRNA to produce the mature 5'-terminus. It can also cleave other RNA substrates such as 4.5S RNA. The protein component plays an auxiliary but essential role in vivo by binding to the 5'-leader sequence and broadening the substrate specificity of the ribozyme.</text>
</comment>
<comment type="catalytic activity">
    <reaction evidence="1">
        <text>Endonucleolytic cleavage of RNA, removing 5'-extranucleotides from tRNA precursor.</text>
        <dbReference type="EC" id="3.1.26.5"/>
    </reaction>
</comment>
<comment type="subunit">
    <text evidence="1">Consists of a catalytic RNA component (M1 or rnpB) and a protein subunit.</text>
</comment>
<comment type="similarity">
    <text evidence="1">Belongs to the RnpA family.</text>
</comment>